<protein>
    <recommendedName>
        <fullName evidence="1">FAD synthase</fullName>
        <ecNumber evidence="1">2.7.7.2</ecNumber>
    </recommendedName>
    <alternativeName>
        <fullName evidence="1">FMN adenylyltransferase</fullName>
    </alternativeName>
    <alternativeName>
        <fullName evidence="1">Flavin adenine dinucleotide synthase</fullName>
    </alternativeName>
</protein>
<keyword id="KW-0067">ATP-binding</keyword>
<keyword id="KW-0274">FAD</keyword>
<keyword id="KW-0285">Flavoprotein</keyword>
<keyword id="KW-0288">FMN</keyword>
<keyword id="KW-0547">Nucleotide-binding</keyword>
<keyword id="KW-0548">Nucleotidyltransferase</keyword>
<keyword id="KW-1185">Reference proteome</keyword>
<keyword id="KW-0808">Transferase</keyword>
<gene>
    <name evidence="1" type="primary">ribL</name>
    <name type="ordered locus">Mhun_2404</name>
</gene>
<sequence>MIRVVATGTFDILHPGHLWYLEESAKLGDELYVIVARDANIRHKPRPVIPEEQRLVMVAALKPVTHAVLGDLEDMFRPIREIKPDIITLGCNQHFDPETLQKALEKQNIRAQVVRISEHSSSPFTSSRDIVRKIAELTHQRSQTRETKEQRECGAV</sequence>
<accession>Q2FT79</accession>
<organism>
    <name type="scientific">Methanospirillum hungatei JF-1 (strain ATCC 27890 / DSM 864 / NBRC 100397 / JF-1)</name>
    <dbReference type="NCBI Taxonomy" id="323259"/>
    <lineage>
        <taxon>Archaea</taxon>
        <taxon>Methanobacteriati</taxon>
        <taxon>Methanobacteriota</taxon>
        <taxon>Stenosarchaea group</taxon>
        <taxon>Methanomicrobia</taxon>
        <taxon>Methanomicrobiales</taxon>
        <taxon>Methanospirillaceae</taxon>
        <taxon>Methanospirillum</taxon>
    </lineage>
</organism>
<comment type="function">
    <text evidence="1">Catalyzes the transfer of the AMP portion of ATP to flavin mononucleotide (FMN) to produce flavin adenine dinucleotide (FAD) coenzyme.</text>
</comment>
<comment type="catalytic activity">
    <reaction evidence="1">
        <text>FMN + ATP + H(+) = FAD + diphosphate</text>
        <dbReference type="Rhea" id="RHEA:17237"/>
        <dbReference type="ChEBI" id="CHEBI:15378"/>
        <dbReference type="ChEBI" id="CHEBI:30616"/>
        <dbReference type="ChEBI" id="CHEBI:33019"/>
        <dbReference type="ChEBI" id="CHEBI:57692"/>
        <dbReference type="ChEBI" id="CHEBI:58210"/>
        <dbReference type="EC" id="2.7.7.2"/>
    </reaction>
</comment>
<comment type="cofactor">
    <cofactor evidence="1">
        <name>a divalent metal cation</name>
        <dbReference type="ChEBI" id="CHEBI:60240"/>
    </cofactor>
</comment>
<comment type="pathway">
    <text evidence="1">Cofactor biosynthesis; FAD biosynthesis; FAD from FMN: step 1/1.</text>
</comment>
<comment type="subunit">
    <text evidence="1">Homodimer.</text>
</comment>
<comment type="similarity">
    <text evidence="1">Belongs to the archaeal FAD synthase family.</text>
</comment>
<dbReference type="EC" id="2.7.7.2" evidence="1"/>
<dbReference type="EMBL" id="CP000254">
    <property type="protein sequence ID" value="ABD42106.1"/>
    <property type="molecule type" value="Genomic_DNA"/>
</dbReference>
<dbReference type="RefSeq" id="WP_011449364.1">
    <property type="nucleotide sequence ID" value="NC_007796.1"/>
</dbReference>
<dbReference type="SMR" id="Q2FT79"/>
<dbReference type="FunCoup" id="Q2FT79">
    <property type="interactions" value="10"/>
</dbReference>
<dbReference type="STRING" id="323259.Mhun_2404"/>
<dbReference type="EnsemblBacteria" id="ABD42106">
    <property type="protein sequence ID" value="ABD42106"/>
    <property type="gene ID" value="Mhun_2404"/>
</dbReference>
<dbReference type="GeneID" id="3922391"/>
<dbReference type="KEGG" id="mhu:Mhun_2404"/>
<dbReference type="eggNOG" id="arCOG01222">
    <property type="taxonomic scope" value="Archaea"/>
</dbReference>
<dbReference type="HOGENOM" id="CLU_034585_2_1_2"/>
<dbReference type="InParanoid" id="Q2FT79"/>
<dbReference type="OrthoDB" id="1912at2157"/>
<dbReference type="UniPathway" id="UPA00277">
    <property type="reaction ID" value="UER00407"/>
</dbReference>
<dbReference type="Proteomes" id="UP000001941">
    <property type="component" value="Chromosome"/>
</dbReference>
<dbReference type="GO" id="GO:0005524">
    <property type="term" value="F:ATP binding"/>
    <property type="evidence" value="ECO:0007669"/>
    <property type="project" value="UniProtKB-UniRule"/>
</dbReference>
<dbReference type="GO" id="GO:0003919">
    <property type="term" value="F:FMN adenylyltransferase activity"/>
    <property type="evidence" value="ECO:0007669"/>
    <property type="project" value="UniProtKB-UniRule"/>
</dbReference>
<dbReference type="GO" id="GO:0006747">
    <property type="term" value="P:FAD biosynthetic process"/>
    <property type="evidence" value="ECO:0007669"/>
    <property type="project" value="UniProtKB-UniRule"/>
</dbReference>
<dbReference type="GO" id="GO:0046444">
    <property type="term" value="P:FMN metabolic process"/>
    <property type="evidence" value="ECO:0007669"/>
    <property type="project" value="UniProtKB-UniRule"/>
</dbReference>
<dbReference type="Gene3D" id="3.40.50.620">
    <property type="entry name" value="HUPs"/>
    <property type="match status" value="1"/>
</dbReference>
<dbReference type="HAMAP" id="MF_02115">
    <property type="entry name" value="FAD_synth_arch"/>
    <property type="match status" value="1"/>
</dbReference>
<dbReference type="InterPro" id="IPR050385">
    <property type="entry name" value="Archaeal_FAD_synthase"/>
</dbReference>
<dbReference type="InterPro" id="IPR004821">
    <property type="entry name" value="Cyt_trans-like"/>
</dbReference>
<dbReference type="InterPro" id="IPR024902">
    <property type="entry name" value="FAD_synth_RibL"/>
</dbReference>
<dbReference type="InterPro" id="IPR014729">
    <property type="entry name" value="Rossmann-like_a/b/a_fold"/>
</dbReference>
<dbReference type="NCBIfam" id="TIGR00125">
    <property type="entry name" value="cyt_tran_rel"/>
    <property type="match status" value="1"/>
</dbReference>
<dbReference type="PANTHER" id="PTHR43793">
    <property type="entry name" value="FAD SYNTHASE"/>
    <property type="match status" value="1"/>
</dbReference>
<dbReference type="PANTHER" id="PTHR43793:SF1">
    <property type="entry name" value="FAD SYNTHASE"/>
    <property type="match status" value="1"/>
</dbReference>
<dbReference type="Pfam" id="PF01467">
    <property type="entry name" value="CTP_transf_like"/>
    <property type="match status" value="1"/>
</dbReference>
<dbReference type="SUPFAM" id="SSF52374">
    <property type="entry name" value="Nucleotidylyl transferase"/>
    <property type="match status" value="1"/>
</dbReference>
<name>RIBL_METHJ</name>
<reference key="1">
    <citation type="journal article" date="2016" name="Stand. Genomic Sci.">
        <title>Complete genome sequence of Methanospirillum hungatei type strain JF1.</title>
        <authorList>
            <person name="Gunsalus R.P."/>
            <person name="Cook L.E."/>
            <person name="Crable B."/>
            <person name="Rohlin L."/>
            <person name="McDonald E."/>
            <person name="Mouttaki H."/>
            <person name="Sieber J.R."/>
            <person name="Poweleit N."/>
            <person name="Zhou H."/>
            <person name="Lapidus A.L."/>
            <person name="Daligault H.E."/>
            <person name="Land M."/>
            <person name="Gilna P."/>
            <person name="Ivanova N."/>
            <person name="Kyrpides N."/>
            <person name="Culley D.E."/>
            <person name="McInerney M.J."/>
        </authorList>
    </citation>
    <scope>NUCLEOTIDE SEQUENCE [LARGE SCALE GENOMIC DNA]</scope>
    <source>
        <strain>ATCC 27890 / DSM 864 / NBRC 100397 / JF-1</strain>
    </source>
</reference>
<proteinExistence type="inferred from homology"/>
<feature type="chain" id="PRO_0000406273" description="FAD synthase">
    <location>
        <begin position="1"/>
        <end position="156"/>
    </location>
</feature>
<feature type="binding site" evidence="1">
    <location>
        <begin position="9"/>
        <end position="10"/>
    </location>
    <ligand>
        <name>ATP</name>
        <dbReference type="ChEBI" id="CHEBI:30616"/>
    </ligand>
</feature>
<feature type="binding site" evidence="1">
    <location>
        <begin position="14"/>
        <end position="17"/>
    </location>
    <ligand>
        <name>ATP</name>
        <dbReference type="ChEBI" id="CHEBI:30616"/>
    </ligand>
</feature>
<feature type="binding site" evidence="1">
    <location>
        <position position="92"/>
    </location>
    <ligand>
        <name>ATP</name>
        <dbReference type="ChEBI" id="CHEBI:30616"/>
    </ligand>
</feature>
<feature type="binding site" evidence="1">
    <location>
        <position position="119"/>
    </location>
    <ligand>
        <name>ATP</name>
        <dbReference type="ChEBI" id="CHEBI:30616"/>
    </ligand>
</feature>
<evidence type="ECO:0000255" key="1">
    <source>
        <dbReference type="HAMAP-Rule" id="MF_02115"/>
    </source>
</evidence>